<evidence type="ECO:0000255" key="1">
    <source>
        <dbReference type="HAMAP-Rule" id="MF_01376"/>
    </source>
</evidence>
<reference key="1">
    <citation type="submission" date="2006-10" db="EMBL/GenBank/DDBJ databases">
        <title>Complete sequence of Syntrophobacter fumaroxidans MPOB.</title>
        <authorList>
            <consortium name="US DOE Joint Genome Institute"/>
            <person name="Copeland A."/>
            <person name="Lucas S."/>
            <person name="Lapidus A."/>
            <person name="Barry K."/>
            <person name="Detter J.C."/>
            <person name="Glavina del Rio T."/>
            <person name="Hammon N."/>
            <person name="Israni S."/>
            <person name="Pitluck S."/>
            <person name="Goltsman E.G."/>
            <person name="Martinez M."/>
            <person name="Schmutz J."/>
            <person name="Larimer F."/>
            <person name="Land M."/>
            <person name="Hauser L."/>
            <person name="Kyrpides N."/>
            <person name="Kim E."/>
            <person name="Boone D.R."/>
            <person name="Brockman F."/>
            <person name="Culley D."/>
            <person name="Ferry J."/>
            <person name="Gunsalus R."/>
            <person name="McInerney M.J."/>
            <person name="Morrison M."/>
            <person name="Plugge C."/>
            <person name="Rohlin L."/>
            <person name="Scholten J."/>
            <person name="Sieber J."/>
            <person name="Stams A.J.M."/>
            <person name="Worm P."/>
            <person name="Henstra A.M."/>
            <person name="Richardson P."/>
        </authorList>
    </citation>
    <scope>NUCLEOTIDE SEQUENCE [LARGE SCALE GENOMIC DNA]</scope>
    <source>
        <strain>DSM 10017 / MPOB</strain>
    </source>
</reference>
<protein>
    <recommendedName>
        <fullName evidence="1">2-aminoethylphosphonate--pyruvate transaminase</fullName>
        <ecNumber evidence="1">2.6.1.37</ecNumber>
    </recommendedName>
    <alternativeName>
        <fullName evidence="1">2-aminoethylphosphonate aminotransferase</fullName>
    </alternativeName>
    <alternativeName>
        <fullName evidence="1">AEP transaminase</fullName>
        <shortName evidence="1">AEPT</shortName>
    </alternativeName>
</protein>
<feature type="chain" id="PRO_0000286788" description="2-aminoethylphosphonate--pyruvate transaminase">
    <location>
        <begin position="1"/>
        <end position="371"/>
    </location>
</feature>
<feature type="modified residue" description="N6-(pyridoxal phosphate)lysine" evidence="1">
    <location>
        <position position="198"/>
    </location>
</feature>
<organism>
    <name type="scientific">Syntrophobacter fumaroxidans (strain DSM 10017 / MPOB)</name>
    <dbReference type="NCBI Taxonomy" id="335543"/>
    <lineage>
        <taxon>Bacteria</taxon>
        <taxon>Pseudomonadati</taxon>
        <taxon>Thermodesulfobacteriota</taxon>
        <taxon>Syntrophobacteria</taxon>
        <taxon>Syntrophobacterales</taxon>
        <taxon>Syntrophobacteraceae</taxon>
        <taxon>Syntrophobacter</taxon>
    </lineage>
</organism>
<accession>A0LMC0</accession>
<dbReference type="EC" id="2.6.1.37" evidence="1"/>
<dbReference type="EMBL" id="CP000478">
    <property type="protein sequence ID" value="ABK18572.1"/>
    <property type="molecule type" value="Genomic_DNA"/>
</dbReference>
<dbReference type="RefSeq" id="WP_011699737.1">
    <property type="nucleotide sequence ID" value="NC_008554.1"/>
</dbReference>
<dbReference type="SMR" id="A0LMC0"/>
<dbReference type="STRING" id="335543.Sfum_2895"/>
<dbReference type="KEGG" id="sfu:Sfum_2895"/>
<dbReference type="eggNOG" id="COG0075">
    <property type="taxonomic scope" value="Bacteria"/>
</dbReference>
<dbReference type="HOGENOM" id="CLU_027686_3_1_7"/>
<dbReference type="InParanoid" id="A0LMC0"/>
<dbReference type="OrthoDB" id="9766472at2"/>
<dbReference type="Proteomes" id="UP000001784">
    <property type="component" value="Chromosome"/>
</dbReference>
<dbReference type="GO" id="GO:0047304">
    <property type="term" value="F:2-aminoethylphosphonate-pyruvate transaminase activity"/>
    <property type="evidence" value="ECO:0007669"/>
    <property type="project" value="UniProtKB-EC"/>
</dbReference>
<dbReference type="GO" id="GO:0019700">
    <property type="term" value="P:organic phosphonate catabolic process"/>
    <property type="evidence" value="ECO:0007669"/>
    <property type="project" value="InterPro"/>
</dbReference>
<dbReference type="Gene3D" id="3.90.1150.10">
    <property type="entry name" value="Aspartate Aminotransferase, domain 1"/>
    <property type="match status" value="1"/>
</dbReference>
<dbReference type="Gene3D" id="3.40.640.10">
    <property type="entry name" value="Type I PLP-dependent aspartate aminotransferase-like (Major domain)"/>
    <property type="match status" value="1"/>
</dbReference>
<dbReference type="HAMAP" id="MF_01376">
    <property type="entry name" value="PhnW_aminotrans_5"/>
    <property type="match status" value="1"/>
</dbReference>
<dbReference type="InterPro" id="IPR000192">
    <property type="entry name" value="Aminotrans_V_dom"/>
</dbReference>
<dbReference type="InterPro" id="IPR012703">
    <property type="entry name" value="NH2EtPonate_pyrv_transaminase"/>
</dbReference>
<dbReference type="InterPro" id="IPR015424">
    <property type="entry name" value="PyrdxlP-dep_Trfase"/>
</dbReference>
<dbReference type="InterPro" id="IPR015421">
    <property type="entry name" value="PyrdxlP-dep_Trfase_major"/>
</dbReference>
<dbReference type="InterPro" id="IPR015422">
    <property type="entry name" value="PyrdxlP-dep_Trfase_small"/>
</dbReference>
<dbReference type="InterPro" id="IPR024169">
    <property type="entry name" value="SP_NH2Trfase/AEP_transaminase"/>
</dbReference>
<dbReference type="NCBIfam" id="TIGR03301">
    <property type="entry name" value="PhnW-AepZ"/>
    <property type="match status" value="1"/>
</dbReference>
<dbReference type="NCBIfam" id="NF010006">
    <property type="entry name" value="PRK13479.1"/>
    <property type="match status" value="1"/>
</dbReference>
<dbReference type="NCBIfam" id="TIGR02326">
    <property type="entry name" value="transamin_PhnW"/>
    <property type="match status" value="1"/>
</dbReference>
<dbReference type="PANTHER" id="PTHR42778">
    <property type="entry name" value="2-AMINOETHYLPHOSPHONATE--PYRUVATE TRANSAMINASE"/>
    <property type="match status" value="1"/>
</dbReference>
<dbReference type="PANTHER" id="PTHR42778:SF1">
    <property type="entry name" value="2-AMINOETHYLPHOSPHONATE--PYRUVATE TRANSAMINASE"/>
    <property type="match status" value="1"/>
</dbReference>
<dbReference type="Pfam" id="PF00266">
    <property type="entry name" value="Aminotran_5"/>
    <property type="match status" value="1"/>
</dbReference>
<dbReference type="PIRSF" id="PIRSF000524">
    <property type="entry name" value="SPT"/>
    <property type="match status" value="1"/>
</dbReference>
<dbReference type="SUPFAM" id="SSF53383">
    <property type="entry name" value="PLP-dependent transferases"/>
    <property type="match status" value="1"/>
</dbReference>
<gene>
    <name evidence="1" type="primary">phnW</name>
    <name type="ordered locus">Sfum_2895</name>
</gene>
<name>PHNW_SYNFM</name>
<keyword id="KW-0032">Aminotransferase</keyword>
<keyword id="KW-0663">Pyridoxal phosphate</keyword>
<keyword id="KW-0670">Pyruvate</keyword>
<keyword id="KW-1185">Reference proteome</keyword>
<keyword id="KW-0808">Transferase</keyword>
<comment type="function">
    <text evidence="1">Involved in phosphonate degradation.</text>
</comment>
<comment type="catalytic activity">
    <reaction evidence="1">
        <text>(2-aminoethyl)phosphonate + pyruvate = phosphonoacetaldehyde + L-alanine</text>
        <dbReference type="Rhea" id="RHEA:17021"/>
        <dbReference type="ChEBI" id="CHEBI:15361"/>
        <dbReference type="ChEBI" id="CHEBI:57418"/>
        <dbReference type="ChEBI" id="CHEBI:57972"/>
        <dbReference type="ChEBI" id="CHEBI:58383"/>
        <dbReference type="EC" id="2.6.1.37"/>
    </reaction>
</comment>
<comment type="cofactor">
    <cofactor evidence="1">
        <name>pyridoxal 5'-phosphate</name>
        <dbReference type="ChEBI" id="CHEBI:597326"/>
    </cofactor>
</comment>
<comment type="subunit">
    <text evidence="1">Homodimer.</text>
</comment>
<comment type="similarity">
    <text evidence="1">Belongs to the class-V pyridoxal-phosphate-dependent aminotransferase family. PhnW subfamily.</text>
</comment>
<proteinExistence type="inferred from homology"/>
<sequence>MAPRSFPENPYILLTPGPLSTSPTVKAVMMRDWCTWDRDYNAIVQDIRERLVALATAGAGYTSVLMQGSGTFAVEAALGTALPHDGKLLVISNGHYGDRMALIAGYLGMRSAKLDFGETGRPDPDRVRDTIESDPAITHVAVVHCETTTGMLNPVEEIGRAVKSLGRVFIVDAMSSFGGIPMDIATLGADFLISSANKCIQGVPGFGFVIARRSELEQCAGRSRSLSLDLFQQWKEMETKGGKWRFTSPTHVVRAFAQALNELDDEGGVACRNARYRENRRILTAGMRALGFECLLPEALQSPIITSFLTPGRPGFNFNSLYQELKSRGFVIYPGKVSEADTFRIGTIGHVFPEDMHRLVKAAKDAMHRFG</sequence>